<keyword id="KW-0963">Cytoplasm</keyword>
<keyword id="KW-0233">DNA recombination</keyword>
<keyword id="KW-0238">DNA-binding</keyword>
<keyword id="KW-1185">Reference proteome</keyword>
<feature type="chain" id="PRO_0000355189" description="Tyrosine recombinase XerD-like">
    <location>
        <begin position="1"/>
        <end position="238"/>
    </location>
</feature>
<feature type="domain" description="Core-binding (CB)" evidence="3">
    <location>
        <begin position="1"/>
        <end position="75"/>
    </location>
</feature>
<feature type="domain" description="Tyr recombinase" evidence="2">
    <location>
        <begin position="90"/>
        <end position="238"/>
    </location>
</feature>
<feature type="active site" evidence="2">
    <location>
        <position position="154"/>
    </location>
</feature>
<feature type="active site" evidence="2">
    <location>
        <position position="204"/>
    </location>
</feature>
<feature type="active site" description="O-(3'-phospho-DNA)-tyrosine intermediate" evidence="2">
    <location>
        <position position="236"/>
    </location>
</feature>
<evidence type="ECO:0000250" key="1"/>
<evidence type="ECO:0000255" key="2">
    <source>
        <dbReference type="PROSITE-ProRule" id="PRU01246"/>
    </source>
</evidence>
<evidence type="ECO:0000255" key="3">
    <source>
        <dbReference type="PROSITE-ProRule" id="PRU01248"/>
    </source>
</evidence>
<evidence type="ECO:0000305" key="4"/>
<accession>Q9CG32</accession>
<sequence length="238" mass="28212">MKLPNEIDEYLASRNFSENTRSNYHYDLVSLQAFFEDKSLTTENLELYKIQISNLSPAAQRRKISSANQYLLFLYQRQKVDQYFKIKQVVQKKSQTAQSYHPMIKEFPEFYGPLTCPGQFLALLILEFGLNFAEIQKLKWENFNWNFKYLTIEKAGIKRVLPIREKFAIRVKAINNADELFAKSRQFLYTELKKFTNYSSKEIREQYILHQVKAGKSIYELATLLGLTTITTLEKYYR</sequence>
<organism>
    <name type="scientific">Lactococcus lactis subsp. lactis (strain IL1403)</name>
    <name type="common">Streptococcus lactis</name>
    <dbReference type="NCBI Taxonomy" id="272623"/>
    <lineage>
        <taxon>Bacteria</taxon>
        <taxon>Bacillati</taxon>
        <taxon>Bacillota</taxon>
        <taxon>Bacilli</taxon>
        <taxon>Lactobacillales</taxon>
        <taxon>Streptococcaceae</taxon>
        <taxon>Lactococcus</taxon>
    </lineage>
</organism>
<comment type="function">
    <text>Putative tyrosine recombinase. Not involved in the cutting and rejoining of the recombining DNA molecules on dif(SL) site.</text>
</comment>
<comment type="subcellular location">
    <subcellularLocation>
        <location evidence="1">Cytoplasm</location>
    </subcellularLocation>
</comment>
<comment type="similarity">
    <text evidence="4">Belongs to the 'phage' integrase family. XerD-like subfamily.</text>
</comment>
<comment type="caution">
    <text evidence="4">Although strongly related to XerD, it constitutes a distinct protein family. In contrast to the classic XerD protein, it does not contain the Arg-His-Arg-His (R-H-R-H) sandwich residues that are clustered with the Tyr active site. It also lacks the C-terminal region which is known to mediate the interaction with XerC. It is therefore unknown whether it has tyrosine recombinase activity or acts as a regulator.</text>
</comment>
<comment type="sequence caution" evidence="4">
    <conflict type="erroneous initiation">
        <sequence resource="EMBL-CDS" id="AAK05376"/>
    </conflict>
</comment>
<name>XERDL_LACLA</name>
<reference key="1">
    <citation type="journal article" date="2001" name="Genome Res.">
        <title>The complete genome sequence of the lactic acid bacterium Lactococcus lactis ssp. lactis IL1403.</title>
        <authorList>
            <person name="Bolotin A."/>
            <person name="Wincker P."/>
            <person name="Mauger S."/>
            <person name="Jaillon O."/>
            <person name="Malarme K."/>
            <person name="Weissenbach J."/>
            <person name="Ehrlich S.D."/>
            <person name="Sorokin A."/>
        </authorList>
    </citation>
    <scope>NUCLEOTIDE SEQUENCE [LARGE SCALE GENOMIC DNA]</scope>
    <source>
        <strain>IL1403</strain>
    </source>
</reference>
<reference key="2">
    <citation type="journal article" date="2007" name="PLoS Genet.">
        <title>The unconventional Xer recombination machinery of Streptococci/Lactococci.</title>
        <authorList>
            <person name="Le Bourgeois P."/>
            <person name="Bugarel M."/>
            <person name="Campo N."/>
            <person name="Daveran-Mingot M.-L."/>
            <person name="Labonte J."/>
            <person name="Lanfranchi D."/>
            <person name="Lautier T."/>
            <person name="Pages C."/>
            <person name="Ritzenthaler P."/>
        </authorList>
    </citation>
    <scope>LACK OF FUNCTION IN DNA RECOMBINATION</scope>
</reference>
<proteinExistence type="evidence at protein level"/>
<dbReference type="EMBL" id="AE005176">
    <property type="protein sequence ID" value="AAK05376.1"/>
    <property type="status" value="ALT_INIT"/>
    <property type="molecule type" value="Genomic_DNA"/>
</dbReference>
<dbReference type="PIR" id="F86784">
    <property type="entry name" value="F86784"/>
</dbReference>
<dbReference type="RefSeq" id="NP_267434.2">
    <property type="nucleotide sequence ID" value="NC_002662.1"/>
</dbReference>
<dbReference type="SMR" id="Q9CG32"/>
<dbReference type="PaxDb" id="272623-L109747"/>
<dbReference type="DNASU" id="1114927"/>
<dbReference type="EnsemblBacteria" id="AAK05376">
    <property type="protein sequence ID" value="AAK05376"/>
    <property type="gene ID" value="L109747"/>
</dbReference>
<dbReference type="KEGG" id="lla:L109747"/>
<dbReference type="PATRIC" id="fig|272623.7.peg.1381"/>
<dbReference type="eggNOG" id="COG4974">
    <property type="taxonomic scope" value="Bacteria"/>
</dbReference>
<dbReference type="HOGENOM" id="CLU_1128554_0_0_9"/>
<dbReference type="OrthoDB" id="2241487at2"/>
<dbReference type="Proteomes" id="UP000002196">
    <property type="component" value="Chromosome"/>
</dbReference>
<dbReference type="GO" id="GO:0005737">
    <property type="term" value="C:cytoplasm"/>
    <property type="evidence" value="ECO:0007669"/>
    <property type="project" value="UniProtKB-SubCell"/>
</dbReference>
<dbReference type="GO" id="GO:0003677">
    <property type="term" value="F:DNA binding"/>
    <property type="evidence" value="ECO:0007669"/>
    <property type="project" value="UniProtKB-KW"/>
</dbReference>
<dbReference type="GO" id="GO:0009037">
    <property type="term" value="F:tyrosine-based site-specific recombinase activity"/>
    <property type="evidence" value="ECO:0007669"/>
    <property type="project" value="UniProtKB-UniRule"/>
</dbReference>
<dbReference type="GO" id="GO:0006313">
    <property type="term" value="P:DNA transposition"/>
    <property type="evidence" value="ECO:0007669"/>
    <property type="project" value="UniProtKB-UniRule"/>
</dbReference>
<dbReference type="Gene3D" id="1.10.150.130">
    <property type="match status" value="1"/>
</dbReference>
<dbReference type="Gene3D" id="1.10.443.10">
    <property type="entry name" value="Intergrase catalytic core"/>
    <property type="match status" value="1"/>
</dbReference>
<dbReference type="HAMAP" id="MF_01817">
    <property type="entry name" value="Recomb_XerD_like"/>
    <property type="match status" value="1"/>
</dbReference>
<dbReference type="InterPro" id="IPR044068">
    <property type="entry name" value="CB"/>
</dbReference>
<dbReference type="InterPro" id="IPR011010">
    <property type="entry name" value="DNA_brk_join_enz"/>
</dbReference>
<dbReference type="InterPro" id="IPR013762">
    <property type="entry name" value="Integrase-like_cat_sf"/>
</dbReference>
<dbReference type="InterPro" id="IPR002104">
    <property type="entry name" value="Integrase_catalytic"/>
</dbReference>
<dbReference type="InterPro" id="IPR010998">
    <property type="entry name" value="Integrase_recombinase_N"/>
</dbReference>
<dbReference type="InterPro" id="IPR020876">
    <property type="entry name" value="Tyrosine_recombinase_XerD-like"/>
</dbReference>
<dbReference type="NCBIfam" id="NF002685">
    <property type="entry name" value="PRK02436.1"/>
    <property type="match status" value="1"/>
</dbReference>
<dbReference type="SUPFAM" id="SSF56349">
    <property type="entry name" value="DNA breaking-rejoining enzymes"/>
    <property type="match status" value="1"/>
</dbReference>
<dbReference type="PROSITE" id="PS51900">
    <property type="entry name" value="CB"/>
    <property type="match status" value="1"/>
</dbReference>
<dbReference type="PROSITE" id="PS51898">
    <property type="entry name" value="TYR_RECOMBINASE"/>
    <property type="match status" value="1"/>
</dbReference>
<protein>
    <recommendedName>
        <fullName>Tyrosine recombinase XerD-like</fullName>
    </recommendedName>
</protein>
<gene>
    <name type="primary">ynbA</name>
    <name type="ordered locus">LL1278</name>
    <name type="ORF">L109747</name>
</gene>